<gene>
    <name evidence="1" type="primary">nuoK</name>
    <name type="ordered locus">Plav_3216</name>
</gene>
<protein>
    <recommendedName>
        <fullName evidence="1">NADH-quinone oxidoreductase subunit K</fullName>
        <ecNumber evidence="1">7.1.1.-</ecNumber>
    </recommendedName>
    <alternativeName>
        <fullName evidence="1">NADH dehydrogenase I subunit K</fullName>
    </alternativeName>
    <alternativeName>
        <fullName evidence="1">NDH-1 subunit K</fullName>
    </alternativeName>
</protein>
<sequence length="102" mass="10949">MAIGLEHYLTVAAILFTLGIFGIFLNRKNVIVILMSIELMLLAVNINLVAFSTHLGDLAGQVFALFVLTVAAAEAAIGLAILVVFFRNRGSIAVEDINMMKG</sequence>
<dbReference type="EC" id="7.1.1.-" evidence="1"/>
<dbReference type="EMBL" id="CP000774">
    <property type="protein sequence ID" value="ABS64822.1"/>
    <property type="molecule type" value="Genomic_DNA"/>
</dbReference>
<dbReference type="RefSeq" id="WP_012112150.1">
    <property type="nucleotide sequence ID" value="NC_009719.1"/>
</dbReference>
<dbReference type="SMR" id="A7HY39"/>
<dbReference type="STRING" id="402881.Plav_3216"/>
<dbReference type="KEGG" id="pla:Plav_3216"/>
<dbReference type="eggNOG" id="COG0713">
    <property type="taxonomic scope" value="Bacteria"/>
</dbReference>
<dbReference type="HOGENOM" id="CLU_144724_2_0_5"/>
<dbReference type="OrthoDB" id="9811124at2"/>
<dbReference type="Proteomes" id="UP000006377">
    <property type="component" value="Chromosome"/>
</dbReference>
<dbReference type="GO" id="GO:0030964">
    <property type="term" value="C:NADH dehydrogenase complex"/>
    <property type="evidence" value="ECO:0007669"/>
    <property type="project" value="TreeGrafter"/>
</dbReference>
<dbReference type="GO" id="GO:0005886">
    <property type="term" value="C:plasma membrane"/>
    <property type="evidence" value="ECO:0007669"/>
    <property type="project" value="UniProtKB-SubCell"/>
</dbReference>
<dbReference type="GO" id="GO:0050136">
    <property type="term" value="F:NADH:ubiquinone reductase (non-electrogenic) activity"/>
    <property type="evidence" value="ECO:0007669"/>
    <property type="project" value="UniProtKB-UniRule"/>
</dbReference>
<dbReference type="GO" id="GO:0048038">
    <property type="term" value="F:quinone binding"/>
    <property type="evidence" value="ECO:0007669"/>
    <property type="project" value="UniProtKB-KW"/>
</dbReference>
<dbReference type="GO" id="GO:0042773">
    <property type="term" value="P:ATP synthesis coupled electron transport"/>
    <property type="evidence" value="ECO:0007669"/>
    <property type="project" value="InterPro"/>
</dbReference>
<dbReference type="FunFam" id="1.10.287.3510:FF:000001">
    <property type="entry name" value="NADH-quinone oxidoreductase subunit K"/>
    <property type="match status" value="1"/>
</dbReference>
<dbReference type="Gene3D" id="1.10.287.3510">
    <property type="match status" value="1"/>
</dbReference>
<dbReference type="HAMAP" id="MF_01456">
    <property type="entry name" value="NDH1_NuoK"/>
    <property type="match status" value="1"/>
</dbReference>
<dbReference type="InterPro" id="IPR001133">
    <property type="entry name" value="NADH_UbQ_OxRdtase_chain4L/K"/>
</dbReference>
<dbReference type="InterPro" id="IPR039428">
    <property type="entry name" value="NUOK/Mnh_C1-like"/>
</dbReference>
<dbReference type="NCBIfam" id="NF004320">
    <property type="entry name" value="PRK05715.1-2"/>
    <property type="match status" value="1"/>
</dbReference>
<dbReference type="NCBIfam" id="NF004321">
    <property type="entry name" value="PRK05715.1-3"/>
    <property type="match status" value="1"/>
</dbReference>
<dbReference type="NCBIfam" id="NF004323">
    <property type="entry name" value="PRK05715.1-5"/>
    <property type="match status" value="1"/>
</dbReference>
<dbReference type="PANTHER" id="PTHR11434:SF21">
    <property type="entry name" value="NADH DEHYDROGENASE SUBUNIT 4L-RELATED"/>
    <property type="match status" value="1"/>
</dbReference>
<dbReference type="PANTHER" id="PTHR11434">
    <property type="entry name" value="NADH-UBIQUINONE OXIDOREDUCTASE SUBUNIT ND4L"/>
    <property type="match status" value="1"/>
</dbReference>
<dbReference type="Pfam" id="PF00420">
    <property type="entry name" value="Oxidored_q2"/>
    <property type="match status" value="1"/>
</dbReference>
<keyword id="KW-0997">Cell inner membrane</keyword>
<keyword id="KW-1003">Cell membrane</keyword>
<keyword id="KW-0472">Membrane</keyword>
<keyword id="KW-0520">NAD</keyword>
<keyword id="KW-0874">Quinone</keyword>
<keyword id="KW-1185">Reference proteome</keyword>
<keyword id="KW-1278">Translocase</keyword>
<keyword id="KW-0812">Transmembrane</keyword>
<keyword id="KW-1133">Transmembrane helix</keyword>
<keyword id="KW-0813">Transport</keyword>
<keyword id="KW-0830">Ubiquinone</keyword>
<organism>
    <name type="scientific">Parvibaculum lavamentivorans (strain DS-1 / DSM 13023 / NCIMB 13966)</name>
    <dbReference type="NCBI Taxonomy" id="402881"/>
    <lineage>
        <taxon>Bacteria</taxon>
        <taxon>Pseudomonadati</taxon>
        <taxon>Pseudomonadota</taxon>
        <taxon>Alphaproteobacteria</taxon>
        <taxon>Hyphomicrobiales</taxon>
        <taxon>Parvibaculaceae</taxon>
        <taxon>Parvibaculum</taxon>
    </lineage>
</organism>
<accession>A7HY39</accession>
<reference key="1">
    <citation type="journal article" date="2011" name="Stand. Genomic Sci.">
        <title>Complete genome sequence of Parvibaculum lavamentivorans type strain (DS-1(T)).</title>
        <authorList>
            <person name="Schleheck D."/>
            <person name="Weiss M."/>
            <person name="Pitluck S."/>
            <person name="Bruce D."/>
            <person name="Land M.L."/>
            <person name="Han S."/>
            <person name="Saunders E."/>
            <person name="Tapia R."/>
            <person name="Detter C."/>
            <person name="Brettin T."/>
            <person name="Han J."/>
            <person name="Woyke T."/>
            <person name="Goodwin L."/>
            <person name="Pennacchio L."/>
            <person name="Nolan M."/>
            <person name="Cook A.M."/>
            <person name="Kjelleberg S."/>
            <person name="Thomas T."/>
        </authorList>
    </citation>
    <scope>NUCLEOTIDE SEQUENCE [LARGE SCALE GENOMIC DNA]</scope>
    <source>
        <strain>DS-1 / DSM 13023 / NCIMB 13966</strain>
    </source>
</reference>
<name>NUOK_PARL1</name>
<proteinExistence type="inferred from homology"/>
<evidence type="ECO:0000255" key="1">
    <source>
        <dbReference type="HAMAP-Rule" id="MF_01456"/>
    </source>
</evidence>
<feature type="chain" id="PRO_0000390154" description="NADH-quinone oxidoreductase subunit K">
    <location>
        <begin position="1"/>
        <end position="102"/>
    </location>
</feature>
<feature type="transmembrane region" description="Helical" evidence="1">
    <location>
        <begin position="5"/>
        <end position="25"/>
    </location>
</feature>
<feature type="transmembrane region" description="Helical" evidence="1">
    <location>
        <begin position="31"/>
        <end position="51"/>
    </location>
</feature>
<feature type="transmembrane region" description="Helical" evidence="1">
    <location>
        <begin position="66"/>
        <end position="86"/>
    </location>
</feature>
<comment type="function">
    <text evidence="1">NDH-1 shuttles electrons from NADH, via FMN and iron-sulfur (Fe-S) centers, to quinones in the respiratory chain. The immediate electron acceptor for the enzyme in this species is believed to be ubiquinone. Couples the redox reaction to proton translocation (for every two electrons transferred, four hydrogen ions are translocated across the cytoplasmic membrane), and thus conserves the redox energy in a proton gradient.</text>
</comment>
<comment type="catalytic activity">
    <reaction evidence="1">
        <text>a quinone + NADH + 5 H(+)(in) = a quinol + NAD(+) + 4 H(+)(out)</text>
        <dbReference type="Rhea" id="RHEA:57888"/>
        <dbReference type="ChEBI" id="CHEBI:15378"/>
        <dbReference type="ChEBI" id="CHEBI:24646"/>
        <dbReference type="ChEBI" id="CHEBI:57540"/>
        <dbReference type="ChEBI" id="CHEBI:57945"/>
        <dbReference type="ChEBI" id="CHEBI:132124"/>
    </reaction>
</comment>
<comment type="subunit">
    <text evidence="1">NDH-1 is composed of 14 different subunits. Subunits NuoA, H, J, K, L, M, N constitute the membrane sector of the complex.</text>
</comment>
<comment type="subcellular location">
    <subcellularLocation>
        <location evidence="1">Cell inner membrane</location>
        <topology evidence="1">Multi-pass membrane protein</topology>
    </subcellularLocation>
</comment>
<comment type="similarity">
    <text evidence="1">Belongs to the complex I subunit 4L family.</text>
</comment>